<evidence type="ECO:0000255" key="1"/>
<evidence type="ECO:0000305" key="2"/>
<keyword id="KW-1185">Reference proteome</keyword>
<keyword id="KW-0732">Signal</keyword>
<proteinExistence type="inferred from homology"/>
<feature type="signal peptide" evidence="1">
    <location>
        <begin position="1"/>
        <end position="37"/>
    </location>
</feature>
<feature type="chain" id="PRO_0000036216" description="UPF0164 protein TP_0548">
    <location>
        <begin position="38"/>
        <end position="426"/>
    </location>
</feature>
<organism>
    <name type="scientific">Treponema pallidum (strain Nichols)</name>
    <dbReference type="NCBI Taxonomy" id="243276"/>
    <lineage>
        <taxon>Bacteria</taxon>
        <taxon>Pseudomonadati</taxon>
        <taxon>Spirochaetota</taxon>
        <taxon>Spirochaetia</taxon>
        <taxon>Spirochaetales</taxon>
        <taxon>Treponemataceae</taxon>
        <taxon>Treponema</taxon>
    </lineage>
</organism>
<sequence length="426" mass="45955">MISCSVRRRPRWEPQVGAAFLAFALLPVLASGRGMQAAVATAAGSSGSGSDGKHPGKEQFLQFLIPSGGRYEYLGVSFTALADDASFFEANPAGSAGLSRGEVALFHHSQIHDSHTETVSFARRTQNTGYGASVRAFSSESDLKSFFGGNSGGNKNGGHQGKQGKGFVAIANASHTFCGQYRFKGVSFGCNFKMGFRKGKTDSHVTVAGDLGLRAAFSVAKNFGSNEPNMHVGLVLKNAGISVKTNSCQVEHLNPAIAVGFAYRPVYAFLFSLGLQQTLTKRESPVCSVGFMFFCTQHVTLLASAACEGGAYALSGGAEIRIGSFHLDMGYRYDQIFQAAHPHHVSVGLKWLIPNGGTQADQALLVKESYLVGLRFYDQRRYQEAITAWQLTLRQDPGFEPAAEGIERARRFLKLHEKLSLFDILN</sequence>
<name>Y548_TREPA</name>
<accession>O83559</accession>
<protein>
    <recommendedName>
        <fullName>UPF0164 protein TP_0548</fullName>
    </recommendedName>
</protein>
<dbReference type="EMBL" id="AE000520">
    <property type="protein sequence ID" value="AAC65537.1"/>
    <property type="status" value="ALT_INIT"/>
    <property type="molecule type" value="Genomic_DNA"/>
</dbReference>
<dbReference type="PIR" id="H71310">
    <property type="entry name" value="H71310"/>
</dbReference>
<dbReference type="STRING" id="243276.TP_0548"/>
<dbReference type="EnsemblBacteria" id="AAC65537">
    <property type="protein sequence ID" value="AAC65537"/>
    <property type="gene ID" value="TP_0548"/>
</dbReference>
<dbReference type="KEGG" id="tpa:TP_0548"/>
<dbReference type="eggNOG" id="ENOG5033RFB">
    <property type="taxonomic scope" value="Bacteria"/>
</dbReference>
<dbReference type="HOGENOM" id="CLU_042920_0_0_12"/>
<dbReference type="Proteomes" id="UP000000811">
    <property type="component" value="Chromosome"/>
</dbReference>
<dbReference type="InterPro" id="IPR005362">
    <property type="entry name" value="UPF0164"/>
</dbReference>
<dbReference type="Pfam" id="PF03687">
    <property type="entry name" value="UPF0164"/>
    <property type="match status" value="1"/>
</dbReference>
<gene>
    <name type="ordered locus">TP_0548</name>
</gene>
<comment type="similarity">
    <text evidence="2">Belongs to the UPF0164 family.</text>
</comment>
<comment type="sequence caution" evidence="2">
    <conflict type="erroneous initiation">
        <sequence resource="EMBL-CDS" id="AAC65537"/>
    </conflict>
</comment>
<reference key="1">
    <citation type="journal article" date="1998" name="Science">
        <title>Complete genome sequence of Treponema pallidum, the syphilis spirochete.</title>
        <authorList>
            <person name="Fraser C.M."/>
            <person name="Norris S.J."/>
            <person name="Weinstock G.M."/>
            <person name="White O."/>
            <person name="Sutton G.G."/>
            <person name="Dodson R.J."/>
            <person name="Gwinn M.L."/>
            <person name="Hickey E.K."/>
            <person name="Clayton R.A."/>
            <person name="Ketchum K.A."/>
            <person name="Sodergren E."/>
            <person name="Hardham J.M."/>
            <person name="McLeod M.P."/>
            <person name="Salzberg S.L."/>
            <person name="Peterson J.D."/>
            <person name="Khalak H.G."/>
            <person name="Richardson D.L."/>
            <person name="Howell J.K."/>
            <person name="Chidambaram M."/>
            <person name="Utterback T.R."/>
            <person name="McDonald L.A."/>
            <person name="Artiach P."/>
            <person name="Bowman C."/>
            <person name="Cotton M.D."/>
            <person name="Fujii C."/>
            <person name="Garland S.A."/>
            <person name="Hatch B."/>
            <person name="Horst K."/>
            <person name="Roberts K.M."/>
            <person name="Sandusky M."/>
            <person name="Weidman J.F."/>
            <person name="Smith H.O."/>
            <person name="Venter J.C."/>
        </authorList>
    </citation>
    <scope>NUCLEOTIDE SEQUENCE [LARGE SCALE GENOMIC DNA]</scope>
    <source>
        <strain>Nichols</strain>
    </source>
</reference>